<organism>
    <name type="scientific">Dictyostelium discoideum</name>
    <name type="common">Social amoeba</name>
    <dbReference type="NCBI Taxonomy" id="44689"/>
    <lineage>
        <taxon>Eukaryota</taxon>
        <taxon>Amoebozoa</taxon>
        <taxon>Evosea</taxon>
        <taxon>Eumycetozoa</taxon>
        <taxon>Dictyostelia</taxon>
        <taxon>Dictyosteliales</taxon>
        <taxon>Dictyosteliaceae</taxon>
        <taxon>Dictyostelium</taxon>
    </lineage>
</organism>
<evidence type="ECO:0000250" key="1"/>
<evidence type="ECO:0000305" key="2"/>
<dbReference type="EMBL" id="AAFI02000073">
    <property type="protein sequence ID" value="EAL64974.1"/>
    <property type="molecule type" value="Genomic_DNA"/>
</dbReference>
<dbReference type="EMBL" id="AU263871">
    <property type="status" value="NOT_ANNOTATED_CDS"/>
    <property type="molecule type" value="mRNA"/>
</dbReference>
<dbReference type="RefSeq" id="XP_640004.1">
    <property type="nucleotide sequence ID" value="XM_634912.1"/>
</dbReference>
<dbReference type="SMR" id="Q54NR3"/>
<dbReference type="FunCoup" id="Q54NR3">
    <property type="interactions" value="33"/>
</dbReference>
<dbReference type="STRING" id="44689.Q54NR3"/>
<dbReference type="PaxDb" id="44689-DDB0186330"/>
<dbReference type="EnsemblProtists" id="EAL64974">
    <property type="protein sequence ID" value="EAL64974"/>
    <property type="gene ID" value="DDB_G0285021"/>
</dbReference>
<dbReference type="GeneID" id="8624922"/>
<dbReference type="KEGG" id="ddi:DDB_G0285021"/>
<dbReference type="dictyBase" id="DDB_G0285021"/>
<dbReference type="VEuPathDB" id="AmoebaDB:DDB_G0285021"/>
<dbReference type="eggNOG" id="ENOG502RHNG">
    <property type="taxonomic scope" value="Eukaryota"/>
</dbReference>
<dbReference type="HOGENOM" id="CLU_108081_1_2_1"/>
<dbReference type="InParanoid" id="Q54NR3"/>
<dbReference type="OMA" id="YSEDYDM"/>
<dbReference type="PhylomeDB" id="Q54NR3"/>
<dbReference type="PRO" id="PR:Q54NR3"/>
<dbReference type="Proteomes" id="UP000002195">
    <property type="component" value="Chromosome 4"/>
</dbReference>
<dbReference type="GO" id="GO:0005743">
    <property type="term" value="C:mitochondrial inner membrane"/>
    <property type="evidence" value="ECO:0007669"/>
    <property type="project" value="UniProtKB-SubCell"/>
</dbReference>
<dbReference type="GO" id="GO:0045271">
    <property type="term" value="C:respiratory chain complex I"/>
    <property type="evidence" value="ECO:0000318"/>
    <property type="project" value="GO_Central"/>
</dbReference>
<dbReference type="GO" id="GO:0006120">
    <property type="term" value="P:mitochondrial electron transport, NADH to ubiquinone"/>
    <property type="evidence" value="ECO:0007669"/>
    <property type="project" value="InterPro"/>
</dbReference>
<dbReference type="InterPro" id="IPR033034">
    <property type="entry name" value="NDUFB9"/>
</dbReference>
<dbReference type="PANTHER" id="PTHR12868:SF0">
    <property type="entry name" value="NADH DEHYDROGENASE [UBIQUINONE] 1 BETA SUBCOMPLEX SUBUNIT 9"/>
    <property type="match status" value="1"/>
</dbReference>
<dbReference type="PANTHER" id="PTHR12868">
    <property type="entry name" value="NADH-UBIQUINONE OXIDOREDUCTASE B22 SUBUNIT"/>
    <property type="match status" value="1"/>
</dbReference>
<accession>Q54NR3</accession>
<comment type="function">
    <text evidence="1">Accessory subunit of the mitochondrial membrane respiratory chain NADH dehydrogenase (Complex I), that is believed to be not involved in catalysis. Complex I functions in the transfer of electrons from NADH to the respiratory chain. The immediate electron acceptor for the enzyme is believed to be ubiquinone (By similarity).</text>
</comment>
<comment type="subunit">
    <text evidence="1">Complex I is composed of about 45 different subunits.</text>
</comment>
<comment type="subcellular location">
    <subcellularLocation>
        <location evidence="1">Mitochondrion inner membrane</location>
        <topology evidence="1">Peripheral membrane protein</topology>
        <orientation evidence="1">Matrix side</orientation>
    </subcellularLocation>
</comment>
<comment type="similarity">
    <text evidence="2">Belongs to the complex I LYR family.</text>
</comment>
<name>NDUB9_DICDI</name>
<protein>
    <recommendedName>
        <fullName>NADH dehydrogenase [ubiquinone] 1 beta subcomplex subunit 9</fullName>
    </recommendedName>
</protein>
<feature type="chain" id="PRO_0000330321" description="NADH dehydrogenase [ubiquinone] 1 beta subcomplex subunit 9">
    <location>
        <begin position="1"/>
        <end position="106"/>
    </location>
</feature>
<reference key="1">
    <citation type="journal article" date="2005" name="Nature">
        <title>The genome of the social amoeba Dictyostelium discoideum.</title>
        <authorList>
            <person name="Eichinger L."/>
            <person name="Pachebat J.A."/>
            <person name="Gloeckner G."/>
            <person name="Rajandream M.A."/>
            <person name="Sucgang R."/>
            <person name="Berriman M."/>
            <person name="Song J."/>
            <person name="Olsen R."/>
            <person name="Szafranski K."/>
            <person name="Xu Q."/>
            <person name="Tunggal B."/>
            <person name="Kummerfeld S."/>
            <person name="Madera M."/>
            <person name="Konfortov B.A."/>
            <person name="Rivero F."/>
            <person name="Bankier A.T."/>
            <person name="Lehmann R."/>
            <person name="Hamlin N."/>
            <person name="Davies R."/>
            <person name="Gaudet P."/>
            <person name="Fey P."/>
            <person name="Pilcher K."/>
            <person name="Chen G."/>
            <person name="Saunders D."/>
            <person name="Sodergren E.J."/>
            <person name="Davis P."/>
            <person name="Kerhornou A."/>
            <person name="Nie X."/>
            <person name="Hall N."/>
            <person name="Anjard C."/>
            <person name="Hemphill L."/>
            <person name="Bason N."/>
            <person name="Farbrother P."/>
            <person name="Desany B."/>
            <person name="Just E."/>
            <person name="Morio T."/>
            <person name="Rost R."/>
            <person name="Churcher C.M."/>
            <person name="Cooper J."/>
            <person name="Haydock S."/>
            <person name="van Driessche N."/>
            <person name="Cronin A."/>
            <person name="Goodhead I."/>
            <person name="Muzny D.M."/>
            <person name="Mourier T."/>
            <person name="Pain A."/>
            <person name="Lu M."/>
            <person name="Harper D."/>
            <person name="Lindsay R."/>
            <person name="Hauser H."/>
            <person name="James K.D."/>
            <person name="Quiles M."/>
            <person name="Madan Babu M."/>
            <person name="Saito T."/>
            <person name="Buchrieser C."/>
            <person name="Wardroper A."/>
            <person name="Felder M."/>
            <person name="Thangavelu M."/>
            <person name="Johnson D."/>
            <person name="Knights A."/>
            <person name="Loulseged H."/>
            <person name="Mungall K.L."/>
            <person name="Oliver K."/>
            <person name="Price C."/>
            <person name="Quail M.A."/>
            <person name="Urushihara H."/>
            <person name="Hernandez J."/>
            <person name="Rabbinowitsch E."/>
            <person name="Steffen D."/>
            <person name="Sanders M."/>
            <person name="Ma J."/>
            <person name="Kohara Y."/>
            <person name="Sharp S."/>
            <person name="Simmonds M.N."/>
            <person name="Spiegler S."/>
            <person name="Tivey A."/>
            <person name="Sugano S."/>
            <person name="White B."/>
            <person name="Walker D."/>
            <person name="Woodward J.R."/>
            <person name="Winckler T."/>
            <person name="Tanaka Y."/>
            <person name="Shaulsky G."/>
            <person name="Schleicher M."/>
            <person name="Weinstock G.M."/>
            <person name="Rosenthal A."/>
            <person name="Cox E.C."/>
            <person name="Chisholm R.L."/>
            <person name="Gibbs R.A."/>
            <person name="Loomis W.F."/>
            <person name="Platzer M."/>
            <person name="Kay R.R."/>
            <person name="Williams J.G."/>
            <person name="Dear P.H."/>
            <person name="Noegel A.A."/>
            <person name="Barrell B.G."/>
            <person name="Kuspa A."/>
        </authorList>
    </citation>
    <scope>NUCLEOTIDE SEQUENCE [LARGE SCALE GENOMIC DNA]</scope>
    <source>
        <strain>AX4</strain>
    </source>
</reference>
<reference key="2">
    <citation type="journal article" date="2004" name="Nucleic Acids Res.">
        <title>Analyses of cDNAs from growth and slug stages of Dictyostelium discoideum.</title>
        <authorList>
            <person name="Urushihara H."/>
            <person name="Morio T."/>
            <person name="Saito T."/>
            <person name="Kohara Y."/>
            <person name="Koriki E."/>
            <person name="Ochiai H."/>
            <person name="Maeda M."/>
            <person name="Williams J.G."/>
            <person name="Takeuchi I."/>
            <person name="Tanaka Y."/>
        </authorList>
    </citation>
    <scope>NUCLEOTIDE SEQUENCE [LARGE SCALE MRNA]</scope>
    <source>
        <strain>AX4</strain>
    </source>
</reference>
<proteinExistence type="inferred from homology"/>
<keyword id="KW-0249">Electron transport</keyword>
<keyword id="KW-0472">Membrane</keyword>
<keyword id="KW-0496">Mitochondrion</keyword>
<keyword id="KW-0999">Mitochondrion inner membrane</keyword>
<keyword id="KW-1185">Reference proteome</keyword>
<keyword id="KW-0679">Respiratory chain</keyword>
<keyword id="KW-0813">Transport</keyword>
<sequence length="106" mass="12275">MLSHSQKVVRLYRKAIKSIRDYSEDYDMFLLNAGDLRASLKAGKNETNPFAIQQMVKQLEDFNSYWEHPDPYIPCDGINGTKWQRNTAPAKYAVDPTNHLLENGRE</sequence>
<gene>
    <name type="primary">ndufb9</name>
    <name type="ORF">DDB_G0285021</name>
</gene>